<sequence length="498" mass="54772">MIESNMLVLTLVIPVITAILLVFIGKRPIIKRYVALGGTLLTLVAAIINLANVVKHGPIRVELGSWKAPYSIVFVLDIFSALLIITSIIITAIVILYSYQTIGIERERYYYYFSVLFMLIGIIGAFTTGDIFNLFVYFEVFLMSSYFLLVIGSTKIQLQETIKYVLVNVVSSSFFVMGVAILYSVVGTLNLADISNKLANLSAHDSGLVNIVFILFIFVFATKAGVFPMFVWLPSAYYAPPIPIIAFFGALLTKVGVYAIARTLSLFFSDNVSFSHYVILFLALLTIIFGCVGAVAYANIKKIILYNVMIAVGVILVGVAMMTESGMIGAIYYTLHDMLVKLALFLLIGIMIKITGTADLRQFGGLIKRYPVLGWSFFIAALSLAGIPPLSGFYGKFFIVQSTFERGFYLSGVIVLLSSLVVLYSVIRIFLQGFFGQPKGYDLNNKVDVKYLTTIAIVAVVITVLYGLSADYLYPMVKAGAETFYNPSTYVKAVLGGK</sequence>
<reference key="1">
    <citation type="journal article" date="2006" name="Lancet">
        <title>Complete genome sequence of USA300, an epidemic clone of community-acquired meticillin-resistant Staphylococcus aureus.</title>
        <authorList>
            <person name="Diep B.A."/>
            <person name="Gill S.R."/>
            <person name="Chang R.F."/>
            <person name="Phan T.H."/>
            <person name="Chen J.H."/>
            <person name="Davidson M.G."/>
            <person name="Lin F."/>
            <person name="Lin J."/>
            <person name="Carleton H.A."/>
            <person name="Mongodin E.F."/>
            <person name="Sensabaugh G.F."/>
            <person name="Perdreau-Remington F."/>
        </authorList>
    </citation>
    <scope>NUCLEOTIDE SEQUENCE [LARGE SCALE GENOMIC DNA]</scope>
    <source>
        <strain>USA300</strain>
    </source>
</reference>
<comment type="function">
    <text evidence="1">Mnh complex is a Na(+)/H(+) antiporter involved in Na(+) excretion.</text>
</comment>
<comment type="subunit">
    <text evidence="1">May form a heterooligomeric complex that consists of seven subunits: mnhA1, mnhB1, mnhC1, mnhD1, mnhE1, mnhF1 and mnhG1.</text>
</comment>
<comment type="subcellular location">
    <subcellularLocation>
        <location evidence="3">Cell membrane</location>
        <topology evidence="3">Multi-pass membrane protein</topology>
    </subcellularLocation>
</comment>
<comment type="similarity">
    <text evidence="3">Belongs to the CPA3 antiporters (TC 2.A.63) subunit D family.</text>
</comment>
<proteinExistence type="inferred from homology"/>
<name>MNHD1_STAA3</name>
<protein>
    <recommendedName>
        <fullName>Na(+)/H(+) antiporter subunit D1</fullName>
    </recommendedName>
    <alternativeName>
        <fullName>Mnh complex subunit D1</fullName>
    </alternativeName>
</protein>
<keyword id="KW-0050">Antiport</keyword>
<keyword id="KW-1003">Cell membrane</keyword>
<keyword id="KW-0375">Hydrogen ion transport</keyword>
<keyword id="KW-0406">Ion transport</keyword>
<keyword id="KW-0472">Membrane</keyword>
<keyword id="KW-0915">Sodium</keyword>
<keyword id="KW-0739">Sodium transport</keyword>
<keyword id="KW-0812">Transmembrane</keyword>
<keyword id="KW-1133">Transmembrane helix</keyword>
<keyword id="KW-0813">Transport</keyword>
<feature type="chain" id="PRO_0000372136" description="Na(+)/H(+) antiporter subunit D1">
    <location>
        <begin position="1"/>
        <end position="498"/>
    </location>
</feature>
<feature type="transmembrane region" description="Helical" evidence="2">
    <location>
        <begin position="5"/>
        <end position="25"/>
    </location>
</feature>
<feature type="transmembrane region" description="Helical" evidence="2">
    <location>
        <begin position="34"/>
        <end position="54"/>
    </location>
</feature>
<feature type="transmembrane region" description="Helical" evidence="2">
    <location>
        <begin position="75"/>
        <end position="95"/>
    </location>
</feature>
<feature type="transmembrane region" description="Helical" evidence="2">
    <location>
        <begin position="109"/>
        <end position="129"/>
    </location>
</feature>
<feature type="transmembrane region" description="Helical" evidence="2">
    <location>
        <begin position="131"/>
        <end position="151"/>
    </location>
</feature>
<feature type="transmembrane region" description="Helical" evidence="2">
    <location>
        <begin position="169"/>
        <end position="189"/>
    </location>
</feature>
<feature type="transmembrane region" description="Helical" evidence="2">
    <location>
        <begin position="211"/>
        <end position="231"/>
    </location>
</feature>
<feature type="transmembrane region" description="Helical" evidence="2">
    <location>
        <begin position="241"/>
        <end position="261"/>
    </location>
</feature>
<feature type="transmembrane region" description="Helical" evidence="2">
    <location>
        <begin position="278"/>
        <end position="298"/>
    </location>
</feature>
<feature type="transmembrane region" description="Helical" evidence="2">
    <location>
        <begin position="303"/>
        <end position="323"/>
    </location>
</feature>
<feature type="transmembrane region" description="Helical" evidence="2">
    <location>
        <begin position="338"/>
        <end position="358"/>
    </location>
</feature>
<feature type="transmembrane region" description="Helical" evidence="2">
    <location>
        <begin position="373"/>
        <end position="393"/>
    </location>
</feature>
<feature type="transmembrane region" description="Helical" evidence="2">
    <location>
        <begin position="407"/>
        <end position="427"/>
    </location>
</feature>
<feature type="transmembrane region" description="Helical" evidence="2">
    <location>
        <begin position="455"/>
        <end position="475"/>
    </location>
</feature>
<accession>Q2FIC6</accession>
<gene>
    <name type="primary">mnhD1</name>
    <name type="ordered locus">SAUSA300_0852</name>
</gene>
<organism>
    <name type="scientific">Staphylococcus aureus (strain USA300)</name>
    <dbReference type="NCBI Taxonomy" id="367830"/>
    <lineage>
        <taxon>Bacteria</taxon>
        <taxon>Bacillati</taxon>
        <taxon>Bacillota</taxon>
        <taxon>Bacilli</taxon>
        <taxon>Bacillales</taxon>
        <taxon>Staphylococcaceae</taxon>
        <taxon>Staphylococcus</taxon>
    </lineage>
</organism>
<dbReference type="EMBL" id="CP000255">
    <property type="protein sequence ID" value="ABD21259.1"/>
    <property type="molecule type" value="Genomic_DNA"/>
</dbReference>
<dbReference type="SMR" id="Q2FIC6"/>
<dbReference type="KEGG" id="saa:SAUSA300_0852"/>
<dbReference type="HOGENOM" id="CLU_007100_9_2_9"/>
<dbReference type="OMA" id="ITRWGNQ"/>
<dbReference type="Proteomes" id="UP000001939">
    <property type="component" value="Chromosome"/>
</dbReference>
<dbReference type="GO" id="GO:0005886">
    <property type="term" value="C:plasma membrane"/>
    <property type="evidence" value="ECO:0007669"/>
    <property type="project" value="UniProtKB-SubCell"/>
</dbReference>
<dbReference type="GO" id="GO:0008137">
    <property type="term" value="F:NADH dehydrogenase (ubiquinone) activity"/>
    <property type="evidence" value="ECO:0007669"/>
    <property type="project" value="InterPro"/>
</dbReference>
<dbReference type="GO" id="GO:0015386">
    <property type="term" value="F:potassium:proton antiporter activity"/>
    <property type="evidence" value="ECO:0007669"/>
    <property type="project" value="InterPro"/>
</dbReference>
<dbReference type="GO" id="GO:0042773">
    <property type="term" value="P:ATP synthesis coupled electron transport"/>
    <property type="evidence" value="ECO:0007669"/>
    <property type="project" value="InterPro"/>
</dbReference>
<dbReference type="GO" id="GO:0006814">
    <property type="term" value="P:sodium ion transport"/>
    <property type="evidence" value="ECO:0007669"/>
    <property type="project" value="UniProtKB-KW"/>
</dbReference>
<dbReference type="InterPro" id="IPR050586">
    <property type="entry name" value="CPA3_Na-H_Antiporter_D"/>
</dbReference>
<dbReference type="InterPro" id="IPR004775">
    <property type="entry name" value="MnhD1"/>
</dbReference>
<dbReference type="InterPro" id="IPR003918">
    <property type="entry name" value="NADH_UbQ_OxRdtase"/>
</dbReference>
<dbReference type="InterPro" id="IPR001750">
    <property type="entry name" value="ND/Mrp_TM"/>
</dbReference>
<dbReference type="NCBIfam" id="TIGR00944">
    <property type="entry name" value="2a6301s04"/>
    <property type="match status" value="1"/>
</dbReference>
<dbReference type="NCBIfam" id="NF005818">
    <property type="entry name" value="PRK07691.1"/>
    <property type="match status" value="1"/>
</dbReference>
<dbReference type="PANTHER" id="PTHR42703:SF1">
    <property type="entry name" value="NA(+)_H(+) ANTIPORTER SUBUNIT D1"/>
    <property type="match status" value="1"/>
</dbReference>
<dbReference type="PANTHER" id="PTHR42703">
    <property type="entry name" value="NADH DEHYDROGENASE"/>
    <property type="match status" value="1"/>
</dbReference>
<dbReference type="Pfam" id="PF00361">
    <property type="entry name" value="Proton_antipo_M"/>
    <property type="match status" value="1"/>
</dbReference>
<dbReference type="PRINTS" id="PR01437">
    <property type="entry name" value="NUOXDRDTASE4"/>
</dbReference>
<evidence type="ECO:0000250" key="1"/>
<evidence type="ECO:0000255" key="2"/>
<evidence type="ECO:0000305" key="3"/>